<evidence type="ECO:0000255" key="1">
    <source>
        <dbReference type="HAMAP-Rule" id="MF_00059"/>
    </source>
</evidence>
<proteinExistence type="inferred from homology"/>
<dbReference type="EC" id="2.7.7.6" evidence="1"/>
<dbReference type="EMBL" id="AY115911">
    <property type="protein sequence ID" value="AAM97420.1"/>
    <property type="molecule type" value="Genomic_DNA"/>
</dbReference>
<dbReference type="SMR" id="Q8MAJ0"/>
<dbReference type="GO" id="GO:0009507">
    <property type="term" value="C:chloroplast"/>
    <property type="evidence" value="ECO:0007669"/>
    <property type="project" value="UniProtKB-SubCell"/>
</dbReference>
<dbReference type="GO" id="GO:0000428">
    <property type="term" value="C:DNA-directed RNA polymerase complex"/>
    <property type="evidence" value="ECO:0007669"/>
    <property type="project" value="UniProtKB-KW"/>
</dbReference>
<dbReference type="GO" id="GO:0005739">
    <property type="term" value="C:mitochondrion"/>
    <property type="evidence" value="ECO:0007669"/>
    <property type="project" value="GOC"/>
</dbReference>
<dbReference type="GO" id="GO:0003677">
    <property type="term" value="F:DNA binding"/>
    <property type="evidence" value="ECO:0007669"/>
    <property type="project" value="UniProtKB-UniRule"/>
</dbReference>
<dbReference type="GO" id="GO:0003899">
    <property type="term" value="F:DNA-directed RNA polymerase activity"/>
    <property type="evidence" value="ECO:0007669"/>
    <property type="project" value="UniProtKB-UniRule"/>
</dbReference>
<dbReference type="GO" id="GO:0046983">
    <property type="term" value="F:protein dimerization activity"/>
    <property type="evidence" value="ECO:0007669"/>
    <property type="project" value="InterPro"/>
</dbReference>
<dbReference type="GO" id="GO:0006351">
    <property type="term" value="P:DNA-templated transcription"/>
    <property type="evidence" value="ECO:0007669"/>
    <property type="project" value="UniProtKB-UniRule"/>
</dbReference>
<dbReference type="CDD" id="cd06928">
    <property type="entry name" value="RNAP_alpha_NTD"/>
    <property type="match status" value="1"/>
</dbReference>
<dbReference type="FunFam" id="2.170.120.12:FF:000001">
    <property type="entry name" value="DNA-directed RNA polymerase subunit alpha"/>
    <property type="match status" value="1"/>
</dbReference>
<dbReference type="Gene3D" id="1.10.150.20">
    <property type="entry name" value="5' to 3' exonuclease, C-terminal subdomain"/>
    <property type="match status" value="1"/>
</dbReference>
<dbReference type="Gene3D" id="2.170.120.12">
    <property type="entry name" value="DNA-directed RNA polymerase, insert domain"/>
    <property type="match status" value="1"/>
</dbReference>
<dbReference type="Gene3D" id="3.30.1360.10">
    <property type="entry name" value="RNA polymerase, RBP11-like subunit"/>
    <property type="match status" value="1"/>
</dbReference>
<dbReference type="HAMAP" id="MF_00059">
    <property type="entry name" value="RNApol_bact_RpoA"/>
    <property type="match status" value="1"/>
</dbReference>
<dbReference type="InterPro" id="IPR011262">
    <property type="entry name" value="DNA-dir_RNA_pol_insert"/>
</dbReference>
<dbReference type="InterPro" id="IPR011263">
    <property type="entry name" value="DNA-dir_RNA_pol_RpoA/D/Rpb3"/>
</dbReference>
<dbReference type="InterPro" id="IPR011773">
    <property type="entry name" value="DNA-dir_RpoA"/>
</dbReference>
<dbReference type="InterPro" id="IPR036603">
    <property type="entry name" value="RBP11-like"/>
</dbReference>
<dbReference type="InterPro" id="IPR011260">
    <property type="entry name" value="RNAP_asu_C"/>
</dbReference>
<dbReference type="InterPro" id="IPR036643">
    <property type="entry name" value="RNApol_insert_sf"/>
</dbReference>
<dbReference type="NCBIfam" id="TIGR02027">
    <property type="entry name" value="rpoA"/>
    <property type="match status" value="1"/>
</dbReference>
<dbReference type="Pfam" id="PF01000">
    <property type="entry name" value="RNA_pol_A_bac"/>
    <property type="match status" value="1"/>
</dbReference>
<dbReference type="Pfam" id="PF03118">
    <property type="entry name" value="RNA_pol_A_CTD"/>
    <property type="match status" value="1"/>
</dbReference>
<dbReference type="Pfam" id="PF01193">
    <property type="entry name" value="RNA_pol_L"/>
    <property type="match status" value="1"/>
</dbReference>
<dbReference type="SMART" id="SM00662">
    <property type="entry name" value="RPOLD"/>
    <property type="match status" value="1"/>
</dbReference>
<dbReference type="SUPFAM" id="SSF47789">
    <property type="entry name" value="C-terminal domain of RNA polymerase alpha subunit"/>
    <property type="match status" value="1"/>
</dbReference>
<dbReference type="SUPFAM" id="SSF56553">
    <property type="entry name" value="Insert subdomain of RNA polymerase alpha subunit"/>
    <property type="match status" value="1"/>
</dbReference>
<dbReference type="SUPFAM" id="SSF55257">
    <property type="entry name" value="RBP11-like subunits of RNA polymerase"/>
    <property type="match status" value="1"/>
</dbReference>
<organism>
    <name type="scientific">Aegilops uniaristata</name>
    <name type="common">Goatgrass</name>
    <dbReference type="NCBI Taxonomy" id="4492"/>
    <lineage>
        <taxon>Eukaryota</taxon>
        <taxon>Viridiplantae</taxon>
        <taxon>Streptophyta</taxon>
        <taxon>Embryophyta</taxon>
        <taxon>Tracheophyta</taxon>
        <taxon>Spermatophyta</taxon>
        <taxon>Magnoliopsida</taxon>
        <taxon>Liliopsida</taxon>
        <taxon>Poales</taxon>
        <taxon>Poaceae</taxon>
        <taxon>BOP clade</taxon>
        <taxon>Pooideae</taxon>
        <taxon>Triticodae</taxon>
        <taxon>Triticeae</taxon>
        <taxon>Triticinae</taxon>
        <taxon>Aegilops</taxon>
    </lineage>
</organism>
<sequence>MVREEVAGSTQTLQWKCVESRVDSKRLYYGRFILSPLRKGQADTVGIALRRALLGEIEGACITRAKFGSVPHEYSTIAGIEESVQEILLNLKEIVLRSNLYGVRDASICVKGPRYITAQDIILPPSVEIVDTAQPIANLTEPIDFCIDLQIKRDRGYQTELRKNYQDGSYPIDAVSMPVRNVNYSIFSCGNGNEKHEILFLEIWTNGSLTPKEALYEASRNLIDLFLPFLHAEEEGASFEENKNRFTPPLFTFQKRLTNLKKNKKGIPLNCIFIDQLELTSRTYNCLKRANIHTLLDLLSKTEEDLLRIDSFRMEDRKHIWDTLEKHLPIDLLKNKLSF</sequence>
<keyword id="KW-0150">Chloroplast</keyword>
<keyword id="KW-0240">DNA-directed RNA polymerase</keyword>
<keyword id="KW-0548">Nucleotidyltransferase</keyword>
<keyword id="KW-0934">Plastid</keyword>
<keyword id="KW-0804">Transcription</keyword>
<keyword id="KW-0808">Transferase</keyword>
<name>RPOA_AEGUN</name>
<accession>Q8MAJ0</accession>
<comment type="function">
    <text evidence="1">DNA-dependent RNA polymerase catalyzes the transcription of DNA into RNA using the four ribonucleoside triphosphates as substrates.</text>
</comment>
<comment type="catalytic activity">
    <reaction evidence="1">
        <text>RNA(n) + a ribonucleoside 5'-triphosphate = RNA(n+1) + diphosphate</text>
        <dbReference type="Rhea" id="RHEA:21248"/>
        <dbReference type="Rhea" id="RHEA-COMP:14527"/>
        <dbReference type="Rhea" id="RHEA-COMP:17342"/>
        <dbReference type="ChEBI" id="CHEBI:33019"/>
        <dbReference type="ChEBI" id="CHEBI:61557"/>
        <dbReference type="ChEBI" id="CHEBI:140395"/>
        <dbReference type="EC" id="2.7.7.6"/>
    </reaction>
</comment>
<comment type="subunit">
    <text evidence="1">In plastids the minimal PEP RNA polymerase catalytic core is composed of four subunits: alpha, beta, beta', and beta''. When a (nuclear-encoded) sigma factor is associated with the core the holoenzyme is formed, which can initiate transcription.</text>
</comment>
<comment type="subcellular location">
    <subcellularLocation>
        <location>Plastid</location>
        <location>Chloroplast</location>
    </subcellularLocation>
</comment>
<comment type="domain">
    <text evidence="1">The N-terminal domain is essential for RNAP assembly and basal transcription, whereas the C-terminal domain is involved in interaction with transcriptional regulators and with upstream promoter elements.</text>
</comment>
<comment type="similarity">
    <text evidence="1">Belongs to the RNA polymerase alpha chain family.</text>
</comment>
<geneLocation type="chloroplast"/>
<gene>
    <name evidence="1" type="primary">rpoA</name>
</gene>
<reference key="1">
    <citation type="journal article" date="2002" name="Genome">
        <title>Phylogenetic analysis of North American Elymus and the monogenomic Triticeae (Poaceae) using three chloroplast DNA data sets.</title>
        <authorList>
            <person name="Mason-Gamer R.J."/>
            <person name="Orme N.L."/>
            <person name="Anderson C.M."/>
        </authorList>
    </citation>
    <scope>NUCLEOTIDE SEQUENCE [GENOMIC DNA]</scope>
    <source>
        <strain>G1297</strain>
    </source>
</reference>
<feature type="chain" id="PRO_0000175436" description="DNA-directed RNA polymerase subunit alpha">
    <location>
        <begin position="1"/>
        <end position="339"/>
    </location>
</feature>
<feature type="region of interest" description="Alpha N-terminal domain (alpha-NTD)" evidence="1">
    <location>
        <begin position="1"/>
        <end position="233"/>
    </location>
</feature>
<feature type="region of interest" description="Alpha C-terminal domain (alpha-CTD)" evidence="1">
    <location>
        <begin position="264"/>
        <end position="339"/>
    </location>
</feature>
<protein>
    <recommendedName>
        <fullName evidence="1">DNA-directed RNA polymerase subunit alpha</fullName>
        <shortName evidence="1">PEP</shortName>
        <ecNumber evidence="1">2.7.7.6</ecNumber>
    </recommendedName>
    <alternativeName>
        <fullName evidence="1">Plastid-encoded RNA polymerase subunit alpha</fullName>
        <shortName evidence="1">RNA polymerase subunit alpha</shortName>
    </alternativeName>
</protein>